<accession>Q820E4</accession>
<dbReference type="EC" id="2.1.1.228" evidence="1"/>
<dbReference type="EMBL" id="AE015925">
    <property type="protein sequence ID" value="AAP05398.1"/>
    <property type="molecule type" value="Genomic_DNA"/>
</dbReference>
<dbReference type="RefSeq" id="WP_011006613.1">
    <property type="nucleotide sequence ID" value="NC_003361.3"/>
</dbReference>
<dbReference type="SMR" id="Q820E4"/>
<dbReference type="STRING" id="227941.CCA_00656"/>
<dbReference type="KEGG" id="cca:CCA_00656"/>
<dbReference type="eggNOG" id="COG0336">
    <property type="taxonomic scope" value="Bacteria"/>
</dbReference>
<dbReference type="HOGENOM" id="CLU_047363_0_2_0"/>
<dbReference type="OrthoDB" id="9807416at2"/>
<dbReference type="Proteomes" id="UP000002193">
    <property type="component" value="Chromosome"/>
</dbReference>
<dbReference type="GO" id="GO:0005829">
    <property type="term" value="C:cytosol"/>
    <property type="evidence" value="ECO:0007669"/>
    <property type="project" value="TreeGrafter"/>
</dbReference>
<dbReference type="GO" id="GO:0052906">
    <property type="term" value="F:tRNA (guanine(37)-N1)-methyltransferase activity"/>
    <property type="evidence" value="ECO:0007669"/>
    <property type="project" value="UniProtKB-UniRule"/>
</dbReference>
<dbReference type="GO" id="GO:0002939">
    <property type="term" value="P:tRNA N1-guanine methylation"/>
    <property type="evidence" value="ECO:0007669"/>
    <property type="project" value="TreeGrafter"/>
</dbReference>
<dbReference type="CDD" id="cd18080">
    <property type="entry name" value="TrmD-like"/>
    <property type="match status" value="1"/>
</dbReference>
<dbReference type="FunFam" id="1.10.1270.20:FF:000004">
    <property type="entry name" value="tRNA (guanine-N(1)-)-methyltransferase"/>
    <property type="match status" value="1"/>
</dbReference>
<dbReference type="FunFam" id="3.40.1280.10:FF:000001">
    <property type="entry name" value="tRNA (guanine-N(1)-)-methyltransferase"/>
    <property type="match status" value="1"/>
</dbReference>
<dbReference type="Gene3D" id="3.40.1280.10">
    <property type="match status" value="1"/>
</dbReference>
<dbReference type="Gene3D" id="3.10.180.10">
    <property type="entry name" value="2,3-Dihydroxybiphenyl 1,2-Dioxygenase, domain 1"/>
    <property type="match status" value="1"/>
</dbReference>
<dbReference type="Gene3D" id="1.10.1270.20">
    <property type="entry name" value="tRNA(m1g37)methyltransferase, domain 2"/>
    <property type="match status" value="1"/>
</dbReference>
<dbReference type="HAMAP" id="MF_00605">
    <property type="entry name" value="TrmD"/>
    <property type="match status" value="1"/>
</dbReference>
<dbReference type="InterPro" id="IPR029028">
    <property type="entry name" value="Alpha/beta_knot_MTases"/>
</dbReference>
<dbReference type="InterPro" id="IPR029068">
    <property type="entry name" value="Glyas_Bleomycin-R_OHBP_Dase"/>
</dbReference>
<dbReference type="InterPro" id="IPR023148">
    <property type="entry name" value="tRNA_m1G_MeTrfase_C_sf"/>
</dbReference>
<dbReference type="InterPro" id="IPR002649">
    <property type="entry name" value="tRNA_m1G_MeTrfase_TrmD"/>
</dbReference>
<dbReference type="InterPro" id="IPR029026">
    <property type="entry name" value="tRNA_m1G_MTases_N"/>
</dbReference>
<dbReference type="InterPro" id="IPR016009">
    <property type="entry name" value="tRNA_MeTrfase_TRMD/TRM10"/>
</dbReference>
<dbReference type="NCBIfam" id="NF000648">
    <property type="entry name" value="PRK00026.1"/>
    <property type="match status" value="1"/>
</dbReference>
<dbReference type="NCBIfam" id="TIGR00088">
    <property type="entry name" value="trmD"/>
    <property type="match status" value="1"/>
</dbReference>
<dbReference type="PANTHER" id="PTHR46417">
    <property type="entry name" value="TRNA (GUANINE-N(1)-)-METHYLTRANSFERASE"/>
    <property type="match status" value="1"/>
</dbReference>
<dbReference type="PANTHER" id="PTHR46417:SF1">
    <property type="entry name" value="TRNA (GUANINE-N(1)-)-METHYLTRANSFERASE"/>
    <property type="match status" value="1"/>
</dbReference>
<dbReference type="Pfam" id="PF01746">
    <property type="entry name" value="tRNA_m1G_MT"/>
    <property type="match status" value="1"/>
</dbReference>
<dbReference type="SUPFAM" id="SSF75217">
    <property type="entry name" value="alpha/beta knot"/>
    <property type="match status" value="1"/>
</dbReference>
<dbReference type="SUPFAM" id="SSF54593">
    <property type="entry name" value="Glyoxalase/Bleomycin resistance protein/Dihydroxybiphenyl dioxygenase"/>
    <property type="match status" value="1"/>
</dbReference>
<gene>
    <name evidence="1" type="primary">trmD</name>
    <name type="ordered locus">CCA_00656</name>
</gene>
<feature type="chain" id="PRO_0000060357" description="tRNA (guanine-N(1)-)-methyltransferase">
    <location>
        <begin position="1"/>
        <end position="355"/>
    </location>
</feature>
<feature type="binding site" evidence="1">
    <location>
        <position position="109"/>
    </location>
    <ligand>
        <name>S-adenosyl-L-methionine</name>
        <dbReference type="ChEBI" id="CHEBI:59789"/>
    </ligand>
</feature>
<feature type="binding site" evidence="1">
    <location>
        <begin position="129"/>
        <end position="134"/>
    </location>
    <ligand>
        <name>S-adenosyl-L-methionine</name>
        <dbReference type="ChEBI" id="CHEBI:59789"/>
    </ligand>
</feature>
<comment type="function">
    <text evidence="1">Specifically methylates guanosine-37 in various tRNAs.</text>
</comment>
<comment type="catalytic activity">
    <reaction evidence="1">
        <text>guanosine(37) in tRNA + S-adenosyl-L-methionine = N(1)-methylguanosine(37) in tRNA + S-adenosyl-L-homocysteine + H(+)</text>
        <dbReference type="Rhea" id="RHEA:36899"/>
        <dbReference type="Rhea" id="RHEA-COMP:10145"/>
        <dbReference type="Rhea" id="RHEA-COMP:10147"/>
        <dbReference type="ChEBI" id="CHEBI:15378"/>
        <dbReference type="ChEBI" id="CHEBI:57856"/>
        <dbReference type="ChEBI" id="CHEBI:59789"/>
        <dbReference type="ChEBI" id="CHEBI:73542"/>
        <dbReference type="ChEBI" id="CHEBI:74269"/>
        <dbReference type="EC" id="2.1.1.228"/>
    </reaction>
</comment>
<comment type="subunit">
    <text evidence="1">Homodimer.</text>
</comment>
<comment type="subcellular location">
    <subcellularLocation>
        <location evidence="1">Cytoplasm</location>
    </subcellularLocation>
</comment>
<comment type="similarity">
    <text evidence="1">Belongs to the RNA methyltransferase TrmD family.</text>
</comment>
<sequence length="355" mass="40656">MEIEILSLFPDYFDSPLRSSILGKAIKNGLLKIQSRDIRDFGLGKWKQVDDAPFNNDGMLLMAEPVVQAIRHIKRSDSRVIHLSPQGKPLTAQKSRELAKCSHLIFLCGHYEGIDERALESEVDEEISIGDYVLTNGGIAALVVIDALSRFIPGVLGNQESAEKDSLENGLLEGPQYTRPRVFEGKEVPEVLLQGDHQAVARWRKQVSLDRTRERRPDLYIRYLYDRENEEVFPREEDTKQSTLEGESAVVLEVEDLQRSRKFYSKMFRLNQPSKDKLQIPGRTQMVLHLQEVGLKNKNTAILSLRLDCEDDFFSFLGRWKMLGGTLEQADDHGTVRLVRDFDGHQWTISYKKVK</sequence>
<organism>
    <name type="scientific">Chlamydia caviae (strain ATCC VR-813 / DSM 19441 / 03DC25 / GPIC)</name>
    <name type="common">Chlamydophila caviae</name>
    <dbReference type="NCBI Taxonomy" id="227941"/>
    <lineage>
        <taxon>Bacteria</taxon>
        <taxon>Pseudomonadati</taxon>
        <taxon>Chlamydiota</taxon>
        <taxon>Chlamydiia</taxon>
        <taxon>Chlamydiales</taxon>
        <taxon>Chlamydiaceae</taxon>
        <taxon>Chlamydia/Chlamydophila group</taxon>
        <taxon>Chlamydia</taxon>
    </lineage>
</organism>
<protein>
    <recommendedName>
        <fullName evidence="1">tRNA (guanine-N(1)-)-methyltransferase</fullName>
        <ecNumber evidence="1">2.1.1.228</ecNumber>
    </recommendedName>
    <alternativeName>
        <fullName evidence="1">M1G-methyltransferase</fullName>
    </alternativeName>
    <alternativeName>
        <fullName evidence="1">tRNA [GM37] methyltransferase</fullName>
    </alternativeName>
</protein>
<keyword id="KW-0963">Cytoplasm</keyword>
<keyword id="KW-0489">Methyltransferase</keyword>
<keyword id="KW-0949">S-adenosyl-L-methionine</keyword>
<keyword id="KW-0808">Transferase</keyword>
<keyword id="KW-0819">tRNA processing</keyword>
<proteinExistence type="inferred from homology"/>
<evidence type="ECO:0000255" key="1">
    <source>
        <dbReference type="HAMAP-Rule" id="MF_00605"/>
    </source>
</evidence>
<name>TRMD_CHLCV</name>
<reference key="1">
    <citation type="journal article" date="2003" name="Nucleic Acids Res.">
        <title>Genome sequence of Chlamydophila caviae (Chlamydia psittaci GPIC): examining the role of niche-specific genes in the evolution of the Chlamydiaceae.</title>
        <authorList>
            <person name="Read T.D."/>
            <person name="Myers G.S.A."/>
            <person name="Brunham R.C."/>
            <person name="Nelson W.C."/>
            <person name="Paulsen I.T."/>
            <person name="Heidelberg J.F."/>
            <person name="Holtzapple E.K."/>
            <person name="Khouri H.M."/>
            <person name="Federova N.B."/>
            <person name="Carty H.A."/>
            <person name="Umayam L.A."/>
            <person name="Haft D.H."/>
            <person name="Peterson J.D."/>
            <person name="Beanan M.J."/>
            <person name="White O."/>
            <person name="Salzberg S.L."/>
            <person name="Hsia R.-C."/>
            <person name="McClarty G."/>
            <person name="Rank R.G."/>
            <person name="Bavoil P.M."/>
            <person name="Fraser C.M."/>
        </authorList>
    </citation>
    <scope>NUCLEOTIDE SEQUENCE [LARGE SCALE GENOMIC DNA]</scope>
    <source>
        <strain>ATCC VR-813 / DSM 19441 / 03DC25 / GPIC</strain>
    </source>
</reference>